<evidence type="ECO:0000255" key="1">
    <source>
        <dbReference type="HAMAP-Rule" id="MF_00373"/>
    </source>
</evidence>
<evidence type="ECO:0000305" key="2"/>
<feature type="chain" id="PRO_1000121691" description="Large ribosomal subunit protein bL28">
    <location>
        <begin position="1"/>
        <end position="62"/>
    </location>
</feature>
<organism>
    <name type="scientific">Streptococcus equi subsp. zooepidemicus (strain MGCS10565)</name>
    <dbReference type="NCBI Taxonomy" id="552526"/>
    <lineage>
        <taxon>Bacteria</taxon>
        <taxon>Bacillati</taxon>
        <taxon>Bacillota</taxon>
        <taxon>Bacilli</taxon>
        <taxon>Lactobacillales</taxon>
        <taxon>Streptococcaceae</taxon>
        <taxon>Streptococcus</taxon>
    </lineage>
</organism>
<sequence>MAKVCYFTGRKTVSGNNRSHAMNQTKRTVKPNLQKVTILVDGKPKKVWASARALKSGKVERI</sequence>
<dbReference type="EMBL" id="CP001129">
    <property type="protein sequence ID" value="ACG63045.1"/>
    <property type="molecule type" value="Genomic_DNA"/>
</dbReference>
<dbReference type="RefSeq" id="WP_002982870.1">
    <property type="nucleotide sequence ID" value="NC_011134.1"/>
</dbReference>
<dbReference type="SMR" id="B4U4X8"/>
<dbReference type="GeneID" id="83705580"/>
<dbReference type="KEGG" id="sez:Sez_1716"/>
<dbReference type="HOGENOM" id="CLU_064548_7_1_9"/>
<dbReference type="Proteomes" id="UP000001873">
    <property type="component" value="Chromosome"/>
</dbReference>
<dbReference type="GO" id="GO:1990904">
    <property type="term" value="C:ribonucleoprotein complex"/>
    <property type="evidence" value="ECO:0007669"/>
    <property type="project" value="UniProtKB-KW"/>
</dbReference>
<dbReference type="GO" id="GO:0005840">
    <property type="term" value="C:ribosome"/>
    <property type="evidence" value="ECO:0007669"/>
    <property type="project" value="UniProtKB-KW"/>
</dbReference>
<dbReference type="GO" id="GO:0003735">
    <property type="term" value="F:structural constituent of ribosome"/>
    <property type="evidence" value="ECO:0007669"/>
    <property type="project" value="InterPro"/>
</dbReference>
<dbReference type="GO" id="GO:0006412">
    <property type="term" value="P:translation"/>
    <property type="evidence" value="ECO:0007669"/>
    <property type="project" value="UniProtKB-UniRule"/>
</dbReference>
<dbReference type="Gene3D" id="2.30.170.40">
    <property type="entry name" value="Ribosomal protein L28/L24"/>
    <property type="match status" value="1"/>
</dbReference>
<dbReference type="HAMAP" id="MF_00373">
    <property type="entry name" value="Ribosomal_bL28"/>
    <property type="match status" value="1"/>
</dbReference>
<dbReference type="InterPro" id="IPR050096">
    <property type="entry name" value="Bacterial_rp_bL28"/>
</dbReference>
<dbReference type="InterPro" id="IPR026569">
    <property type="entry name" value="Ribosomal_bL28"/>
</dbReference>
<dbReference type="InterPro" id="IPR034704">
    <property type="entry name" value="Ribosomal_bL28/bL31-like_sf"/>
</dbReference>
<dbReference type="InterPro" id="IPR001383">
    <property type="entry name" value="Ribosomal_bL28_bact-type"/>
</dbReference>
<dbReference type="InterPro" id="IPR037147">
    <property type="entry name" value="Ribosomal_bL28_sf"/>
</dbReference>
<dbReference type="NCBIfam" id="TIGR00009">
    <property type="entry name" value="L28"/>
    <property type="match status" value="1"/>
</dbReference>
<dbReference type="PANTHER" id="PTHR39080">
    <property type="entry name" value="50S RIBOSOMAL PROTEIN L28"/>
    <property type="match status" value="1"/>
</dbReference>
<dbReference type="PANTHER" id="PTHR39080:SF1">
    <property type="entry name" value="LARGE RIBOSOMAL SUBUNIT PROTEIN BL28A"/>
    <property type="match status" value="1"/>
</dbReference>
<dbReference type="Pfam" id="PF00830">
    <property type="entry name" value="Ribosomal_L28"/>
    <property type="match status" value="1"/>
</dbReference>
<dbReference type="SUPFAM" id="SSF143800">
    <property type="entry name" value="L28p-like"/>
    <property type="match status" value="1"/>
</dbReference>
<accession>B4U4X8</accession>
<reference key="1">
    <citation type="journal article" date="2008" name="PLoS ONE">
        <title>Genome sequence of a lancefield group C Streptococcus zooepidemicus strain causing epidemic nephritis: new information about an old disease.</title>
        <authorList>
            <person name="Beres S.B."/>
            <person name="Sesso R."/>
            <person name="Pinto S.W.L."/>
            <person name="Hoe N.P."/>
            <person name="Porcella S.F."/>
            <person name="Deleo F.R."/>
            <person name="Musser J.M."/>
        </authorList>
    </citation>
    <scope>NUCLEOTIDE SEQUENCE [LARGE SCALE GENOMIC DNA]</scope>
    <source>
        <strain>MGCS10565</strain>
    </source>
</reference>
<keyword id="KW-0687">Ribonucleoprotein</keyword>
<keyword id="KW-0689">Ribosomal protein</keyword>
<name>RL28_STREM</name>
<comment type="similarity">
    <text evidence="1">Belongs to the bacterial ribosomal protein bL28 family.</text>
</comment>
<proteinExistence type="inferred from homology"/>
<gene>
    <name evidence="1" type="primary">rpmB</name>
    <name type="ordered locus">Sez_1716</name>
</gene>
<protein>
    <recommendedName>
        <fullName evidence="1">Large ribosomal subunit protein bL28</fullName>
    </recommendedName>
    <alternativeName>
        <fullName evidence="2">50S ribosomal protein L28</fullName>
    </alternativeName>
</protein>